<organism>
    <name type="scientific">Escherichia coli O45:K1 (strain S88 / ExPEC)</name>
    <dbReference type="NCBI Taxonomy" id="585035"/>
    <lineage>
        <taxon>Bacteria</taxon>
        <taxon>Pseudomonadati</taxon>
        <taxon>Pseudomonadota</taxon>
        <taxon>Gammaproteobacteria</taxon>
        <taxon>Enterobacterales</taxon>
        <taxon>Enterobacteriaceae</taxon>
        <taxon>Escherichia</taxon>
    </lineage>
</organism>
<sequence length="109" mass="12594">MSAQPVDIQIFGRSLRVNCPPDQRDALNQAADDLNQRLQDLKERTRVTNTEQLVFIAALNISYELAQEKAKTRDYAASMEQRIRMLQQTIEQALLEQGRITEKTNQNFE</sequence>
<protein>
    <recommendedName>
        <fullName evidence="1">Cell division protein ZapA</fullName>
    </recommendedName>
    <alternativeName>
        <fullName evidence="1">Z ring-associated protein ZapA</fullName>
    </alternativeName>
</protein>
<proteinExistence type="inferred from homology"/>
<keyword id="KW-0131">Cell cycle</keyword>
<keyword id="KW-0132">Cell division</keyword>
<keyword id="KW-0175">Coiled coil</keyword>
<keyword id="KW-0963">Cytoplasm</keyword>
<keyword id="KW-1185">Reference proteome</keyword>
<keyword id="KW-0717">Septation</keyword>
<gene>
    <name evidence="1" type="primary">zapA</name>
    <name type="ordered locus">ECS88_3190</name>
</gene>
<name>ZAPA_ECO45</name>
<evidence type="ECO:0000255" key="1">
    <source>
        <dbReference type="HAMAP-Rule" id="MF_02012"/>
    </source>
</evidence>
<accession>B7MM96</accession>
<feature type="chain" id="PRO_1000189507" description="Cell division protein ZapA">
    <location>
        <begin position="1"/>
        <end position="109"/>
    </location>
</feature>
<feature type="coiled-coil region" evidence="1">
    <location>
        <begin position="21"/>
        <end position="99"/>
    </location>
</feature>
<reference key="1">
    <citation type="journal article" date="2009" name="PLoS Genet.">
        <title>Organised genome dynamics in the Escherichia coli species results in highly diverse adaptive paths.</title>
        <authorList>
            <person name="Touchon M."/>
            <person name="Hoede C."/>
            <person name="Tenaillon O."/>
            <person name="Barbe V."/>
            <person name="Baeriswyl S."/>
            <person name="Bidet P."/>
            <person name="Bingen E."/>
            <person name="Bonacorsi S."/>
            <person name="Bouchier C."/>
            <person name="Bouvet O."/>
            <person name="Calteau A."/>
            <person name="Chiapello H."/>
            <person name="Clermont O."/>
            <person name="Cruveiller S."/>
            <person name="Danchin A."/>
            <person name="Diard M."/>
            <person name="Dossat C."/>
            <person name="Karoui M.E."/>
            <person name="Frapy E."/>
            <person name="Garry L."/>
            <person name="Ghigo J.M."/>
            <person name="Gilles A.M."/>
            <person name="Johnson J."/>
            <person name="Le Bouguenec C."/>
            <person name="Lescat M."/>
            <person name="Mangenot S."/>
            <person name="Martinez-Jehanne V."/>
            <person name="Matic I."/>
            <person name="Nassif X."/>
            <person name="Oztas S."/>
            <person name="Petit M.A."/>
            <person name="Pichon C."/>
            <person name="Rouy Z."/>
            <person name="Ruf C.S."/>
            <person name="Schneider D."/>
            <person name="Tourret J."/>
            <person name="Vacherie B."/>
            <person name="Vallenet D."/>
            <person name="Medigue C."/>
            <person name="Rocha E.P.C."/>
            <person name="Denamur E."/>
        </authorList>
    </citation>
    <scope>NUCLEOTIDE SEQUENCE [LARGE SCALE GENOMIC DNA]</scope>
    <source>
        <strain>S88 / ExPEC</strain>
    </source>
</reference>
<comment type="function">
    <text evidence="1">Activator of cell division through the inhibition of FtsZ GTPase activity, therefore promoting FtsZ assembly into bundles of protofilaments necessary for the formation of the division Z ring. It is recruited early at mid-cell but it is not essential for cell division.</text>
</comment>
<comment type="subunit">
    <text evidence="1">Homodimer. Interacts with FtsZ.</text>
</comment>
<comment type="subcellular location">
    <subcellularLocation>
        <location evidence="1">Cytoplasm</location>
    </subcellularLocation>
    <text evidence="1">Localizes at mid-cell.</text>
</comment>
<comment type="similarity">
    <text evidence="1">Belongs to the ZapA family. Type 1 subfamily.</text>
</comment>
<dbReference type="EMBL" id="CU928161">
    <property type="protein sequence ID" value="CAR04425.1"/>
    <property type="molecule type" value="Genomic_DNA"/>
</dbReference>
<dbReference type="RefSeq" id="WP_001276008.1">
    <property type="nucleotide sequence ID" value="NC_011742.1"/>
</dbReference>
<dbReference type="SMR" id="B7MM96"/>
<dbReference type="GeneID" id="93779091"/>
<dbReference type="KEGG" id="ecz:ECS88_3190"/>
<dbReference type="HOGENOM" id="CLU_116623_3_0_6"/>
<dbReference type="Proteomes" id="UP000000747">
    <property type="component" value="Chromosome"/>
</dbReference>
<dbReference type="GO" id="GO:0032153">
    <property type="term" value="C:cell division site"/>
    <property type="evidence" value="ECO:0007669"/>
    <property type="project" value="TreeGrafter"/>
</dbReference>
<dbReference type="GO" id="GO:0030428">
    <property type="term" value="C:cell septum"/>
    <property type="evidence" value="ECO:0007669"/>
    <property type="project" value="TreeGrafter"/>
</dbReference>
<dbReference type="GO" id="GO:0005829">
    <property type="term" value="C:cytosol"/>
    <property type="evidence" value="ECO:0007669"/>
    <property type="project" value="TreeGrafter"/>
</dbReference>
<dbReference type="GO" id="GO:0005886">
    <property type="term" value="C:plasma membrane"/>
    <property type="evidence" value="ECO:0007669"/>
    <property type="project" value="UniProtKB-UniRule"/>
</dbReference>
<dbReference type="GO" id="GO:0000917">
    <property type="term" value="P:division septum assembly"/>
    <property type="evidence" value="ECO:0007669"/>
    <property type="project" value="UniProtKB-KW"/>
</dbReference>
<dbReference type="GO" id="GO:0043093">
    <property type="term" value="P:FtsZ-dependent cytokinesis"/>
    <property type="evidence" value="ECO:0007669"/>
    <property type="project" value="TreeGrafter"/>
</dbReference>
<dbReference type="GO" id="GO:0000921">
    <property type="term" value="P:septin ring assembly"/>
    <property type="evidence" value="ECO:0007669"/>
    <property type="project" value="TreeGrafter"/>
</dbReference>
<dbReference type="FunFam" id="1.20.5.50:FF:000001">
    <property type="entry name" value="Cell division protein ZapA"/>
    <property type="match status" value="1"/>
</dbReference>
<dbReference type="FunFam" id="3.30.160.880:FF:000001">
    <property type="entry name" value="Cell division protein ZapA"/>
    <property type="match status" value="1"/>
</dbReference>
<dbReference type="Gene3D" id="1.20.5.50">
    <property type="match status" value="1"/>
</dbReference>
<dbReference type="Gene3D" id="3.30.160.880">
    <property type="entry name" value="Cell division protein ZapA protomer, N-terminal domain"/>
    <property type="match status" value="1"/>
</dbReference>
<dbReference type="HAMAP" id="MF_02012">
    <property type="entry name" value="ZapA_type1"/>
    <property type="match status" value="1"/>
</dbReference>
<dbReference type="InterPro" id="IPR007838">
    <property type="entry name" value="Cell_div_ZapA-like"/>
</dbReference>
<dbReference type="InterPro" id="IPR036192">
    <property type="entry name" value="Cell_div_ZapA-like_sf"/>
</dbReference>
<dbReference type="InterPro" id="IPR023771">
    <property type="entry name" value="Cell_div_ZapA_eubact"/>
</dbReference>
<dbReference type="InterPro" id="IPR042233">
    <property type="entry name" value="Cell_div_ZapA_N"/>
</dbReference>
<dbReference type="NCBIfam" id="NF008209">
    <property type="entry name" value="PRK10972.1"/>
    <property type="match status" value="1"/>
</dbReference>
<dbReference type="PANTHER" id="PTHR34981">
    <property type="entry name" value="CELL DIVISION PROTEIN ZAPA"/>
    <property type="match status" value="1"/>
</dbReference>
<dbReference type="PANTHER" id="PTHR34981:SF1">
    <property type="entry name" value="CELL DIVISION PROTEIN ZAPA"/>
    <property type="match status" value="1"/>
</dbReference>
<dbReference type="Pfam" id="PF05164">
    <property type="entry name" value="ZapA"/>
    <property type="match status" value="1"/>
</dbReference>
<dbReference type="SUPFAM" id="SSF102829">
    <property type="entry name" value="Cell division protein ZapA-like"/>
    <property type="match status" value="1"/>
</dbReference>